<organism>
    <name type="scientific">Nitrobacter hamburgensis (strain DSM 10229 / NCIMB 13809 / X14)</name>
    <dbReference type="NCBI Taxonomy" id="323097"/>
    <lineage>
        <taxon>Bacteria</taxon>
        <taxon>Pseudomonadati</taxon>
        <taxon>Pseudomonadota</taxon>
        <taxon>Alphaproteobacteria</taxon>
        <taxon>Hyphomicrobiales</taxon>
        <taxon>Nitrobacteraceae</taxon>
        <taxon>Nitrobacter</taxon>
    </lineage>
</organism>
<dbReference type="EC" id="2.7.8.13" evidence="1"/>
<dbReference type="EMBL" id="CP000319">
    <property type="protein sequence ID" value="ABE62101.1"/>
    <property type="molecule type" value="Genomic_DNA"/>
</dbReference>
<dbReference type="RefSeq" id="WP_011509793.1">
    <property type="nucleotide sequence ID" value="NC_007964.1"/>
</dbReference>
<dbReference type="SMR" id="Q1QNU6"/>
<dbReference type="STRING" id="323097.Nham_1276"/>
<dbReference type="KEGG" id="nha:Nham_1276"/>
<dbReference type="eggNOG" id="COG0472">
    <property type="taxonomic scope" value="Bacteria"/>
</dbReference>
<dbReference type="HOGENOM" id="CLU_023982_0_0_5"/>
<dbReference type="OrthoDB" id="9805475at2"/>
<dbReference type="UniPathway" id="UPA00219"/>
<dbReference type="Proteomes" id="UP000001953">
    <property type="component" value="Chromosome"/>
</dbReference>
<dbReference type="GO" id="GO:0005886">
    <property type="term" value="C:plasma membrane"/>
    <property type="evidence" value="ECO:0007669"/>
    <property type="project" value="UniProtKB-SubCell"/>
</dbReference>
<dbReference type="GO" id="GO:0046872">
    <property type="term" value="F:metal ion binding"/>
    <property type="evidence" value="ECO:0007669"/>
    <property type="project" value="UniProtKB-KW"/>
</dbReference>
<dbReference type="GO" id="GO:0008963">
    <property type="term" value="F:phospho-N-acetylmuramoyl-pentapeptide-transferase activity"/>
    <property type="evidence" value="ECO:0007669"/>
    <property type="project" value="UniProtKB-UniRule"/>
</dbReference>
<dbReference type="GO" id="GO:0051992">
    <property type="term" value="F:UDP-N-acetylmuramoyl-L-alanyl-D-glutamyl-meso-2,6-diaminopimelyl-D-alanyl-D-alanine:undecaprenyl-phosphate transferase activity"/>
    <property type="evidence" value="ECO:0007669"/>
    <property type="project" value="RHEA"/>
</dbReference>
<dbReference type="GO" id="GO:0051301">
    <property type="term" value="P:cell division"/>
    <property type="evidence" value="ECO:0007669"/>
    <property type="project" value="UniProtKB-KW"/>
</dbReference>
<dbReference type="GO" id="GO:0071555">
    <property type="term" value="P:cell wall organization"/>
    <property type="evidence" value="ECO:0007669"/>
    <property type="project" value="UniProtKB-KW"/>
</dbReference>
<dbReference type="GO" id="GO:0009252">
    <property type="term" value="P:peptidoglycan biosynthetic process"/>
    <property type="evidence" value="ECO:0007669"/>
    <property type="project" value="UniProtKB-UniRule"/>
</dbReference>
<dbReference type="GO" id="GO:0008360">
    <property type="term" value="P:regulation of cell shape"/>
    <property type="evidence" value="ECO:0007669"/>
    <property type="project" value="UniProtKB-KW"/>
</dbReference>
<dbReference type="CDD" id="cd06852">
    <property type="entry name" value="GT_MraY"/>
    <property type="match status" value="1"/>
</dbReference>
<dbReference type="HAMAP" id="MF_00038">
    <property type="entry name" value="MraY"/>
    <property type="match status" value="1"/>
</dbReference>
<dbReference type="InterPro" id="IPR000715">
    <property type="entry name" value="Glycosyl_transferase_4"/>
</dbReference>
<dbReference type="InterPro" id="IPR003524">
    <property type="entry name" value="PNAcMuramoyl-5peptid_Trfase"/>
</dbReference>
<dbReference type="InterPro" id="IPR018480">
    <property type="entry name" value="PNAcMuramoyl-5peptid_Trfase_CS"/>
</dbReference>
<dbReference type="NCBIfam" id="TIGR00445">
    <property type="entry name" value="mraY"/>
    <property type="match status" value="1"/>
</dbReference>
<dbReference type="PANTHER" id="PTHR22926">
    <property type="entry name" value="PHOSPHO-N-ACETYLMURAMOYL-PENTAPEPTIDE-TRANSFERASE"/>
    <property type="match status" value="1"/>
</dbReference>
<dbReference type="PANTHER" id="PTHR22926:SF5">
    <property type="entry name" value="PHOSPHO-N-ACETYLMURAMOYL-PENTAPEPTIDE-TRANSFERASE HOMOLOG"/>
    <property type="match status" value="1"/>
</dbReference>
<dbReference type="Pfam" id="PF00953">
    <property type="entry name" value="Glycos_transf_4"/>
    <property type="match status" value="1"/>
</dbReference>
<dbReference type="Pfam" id="PF10555">
    <property type="entry name" value="MraY_sig1"/>
    <property type="match status" value="1"/>
</dbReference>
<dbReference type="PROSITE" id="PS01347">
    <property type="entry name" value="MRAY_1"/>
    <property type="match status" value="1"/>
</dbReference>
<dbReference type="PROSITE" id="PS01348">
    <property type="entry name" value="MRAY_2"/>
    <property type="match status" value="1"/>
</dbReference>
<name>MRAY_NITHX</name>
<sequence>MFYWLIDLSNTVPGLSIFKPMLNVFRYITFRTGGAMVTGALFVFLFGPWIIDNLRLRQGKGQPIRADGPQSHLVSKKGTPTMGGLMILSGLVVSTVLWANPLNPYVWIVLAVTLGFGFIGFYDDYLKVTKQTHAGFAGRTRLLLELLIALAACYALIRLGREPFSTALVIPFFKDVVVDLGWFFLAFGAFIIVGAGNAVNLTDGLDGLAIVPVMIAAASFGMIAYLAGNAVFADYLQINYIAGTGELAVLCGAVLGAGLGFLWFNAPPASIFMGDTGSLALGGMLGSIAVAVKHEIVLAVIGGLFVLEAVSVIVQVASFKLTGKRIFKMAPIHHHFEQLGWTEPQIVIRFWIISVMLALAGLSTLKLR</sequence>
<proteinExistence type="inferred from homology"/>
<gene>
    <name evidence="1" type="primary">mraY</name>
    <name type="ordered locus">Nham_1276</name>
</gene>
<keyword id="KW-0131">Cell cycle</keyword>
<keyword id="KW-0132">Cell division</keyword>
<keyword id="KW-0997">Cell inner membrane</keyword>
<keyword id="KW-1003">Cell membrane</keyword>
<keyword id="KW-0133">Cell shape</keyword>
<keyword id="KW-0961">Cell wall biogenesis/degradation</keyword>
<keyword id="KW-0460">Magnesium</keyword>
<keyword id="KW-0472">Membrane</keyword>
<keyword id="KW-0479">Metal-binding</keyword>
<keyword id="KW-0573">Peptidoglycan synthesis</keyword>
<keyword id="KW-1185">Reference proteome</keyword>
<keyword id="KW-0808">Transferase</keyword>
<keyword id="KW-0812">Transmembrane</keyword>
<keyword id="KW-1133">Transmembrane helix</keyword>
<accession>Q1QNU6</accession>
<feature type="chain" id="PRO_1000003021" description="Phospho-N-acetylmuramoyl-pentapeptide-transferase">
    <location>
        <begin position="1"/>
        <end position="368"/>
    </location>
</feature>
<feature type="transmembrane region" description="Helical" evidence="1">
    <location>
        <begin position="32"/>
        <end position="52"/>
    </location>
</feature>
<feature type="transmembrane region" description="Helical" evidence="1">
    <location>
        <begin position="79"/>
        <end position="99"/>
    </location>
</feature>
<feature type="transmembrane region" description="Helical" evidence="1">
    <location>
        <begin position="102"/>
        <end position="122"/>
    </location>
</feature>
<feature type="transmembrane region" description="Helical" evidence="1">
    <location>
        <begin position="140"/>
        <end position="160"/>
    </location>
</feature>
<feature type="transmembrane region" description="Helical" evidence="1">
    <location>
        <begin position="176"/>
        <end position="196"/>
    </location>
</feature>
<feature type="transmembrane region" description="Helical" evidence="1">
    <location>
        <begin position="207"/>
        <end position="227"/>
    </location>
</feature>
<feature type="transmembrane region" description="Helical" evidence="1">
    <location>
        <begin position="247"/>
        <end position="267"/>
    </location>
</feature>
<feature type="transmembrane region" description="Helical" evidence="1">
    <location>
        <begin position="271"/>
        <end position="291"/>
    </location>
</feature>
<feature type="transmembrane region" description="Helical" evidence="1">
    <location>
        <begin position="296"/>
        <end position="316"/>
    </location>
</feature>
<feature type="transmembrane region" description="Helical" evidence="1">
    <location>
        <begin position="345"/>
        <end position="365"/>
    </location>
</feature>
<evidence type="ECO:0000255" key="1">
    <source>
        <dbReference type="HAMAP-Rule" id="MF_00038"/>
    </source>
</evidence>
<reference key="1">
    <citation type="submission" date="2006-03" db="EMBL/GenBank/DDBJ databases">
        <title>Complete sequence of chromosome of Nitrobacter hamburgensis X14.</title>
        <authorList>
            <consortium name="US DOE Joint Genome Institute"/>
            <person name="Copeland A."/>
            <person name="Lucas S."/>
            <person name="Lapidus A."/>
            <person name="Barry K."/>
            <person name="Detter J.C."/>
            <person name="Glavina del Rio T."/>
            <person name="Hammon N."/>
            <person name="Israni S."/>
            <person name="Dalin E."/>
            <person name="Tice H."/>
            <person name="Pitluck S."/>
            <person name="Chain P."/>
            <person name="Malfatti S."/>
            <person name="Shin M."/>
            <person name="Vergez L."/>
            <person name="Schmutz J."/>
            <person name="Larimer F."/>
            <person name="Land M."/>
            <person name="Hauser L."/>
            <person name="Kyrpides N."/>
            <person name="Ivanova N."/>
            <person name="Ward B."/>
            <person name="Arp D."/>
            <person name="Klotz M."/>
            <person name="Stein L."/>
            <person name="O'Mullan G."/>
            <person name="Starkenburg S."/>
            <person name="Sayavedra L."/>
            <person name="Poret-Peterson A.T."/>
            <person name="Gentry M.E."/>
            <person name="Bruce D."/>
            <person name="Richardson P."/>
        </authorList>
    </citation>
    <scope>NUCLEOTIDE SEQUENCE [LARGE SCALE GENOMIC DNA]</scope>
    <source>
        <strain>DSM 10229 / NCIMB 13809 / X14</strain>
    </source>
</reference>
<comment type="function">
    <text evidence="1">Catalyzes the initial step of the lipid cycle reactions in the biosynthesis of the cell wall peptidoglycan: transfers peptidoglycan precursor phospho-MurNAc-pentapeptide from UDP-MurNAc-pentapeptide onto the lipid carrier undecaprenyl phosphate, yielding undecaprenyl-pyrophosphoryl-MurNAc-pentapeptide, known as lipid I.</text>
</comment>
<comment type="catalytic activity">
    <reaction evidence="1">
        <text>UDP-N-acetyl-alpha-D-muramoyl-L-alanyl-gamma-D-glutamyl-meso-2,6-diaminopimeloyl-D-alanyl-D-alanine + di-trans,octa-cis-undecaprenyl phosphate = di-trans,octa-cis-undecaprenyl diphospho-N-acetyl-alpha-D-muramoyl-L-alanyl-D-glutamyl-meso-2,6-diaminopimeloyl-D-alanyl-D-alanine + UMP</text>
        <dbReference type="Rhea" id="RHEA:28386"/>
        <dbReference type="ChEBI" id="CHEBI:57865"/>
        <dbReference type="ChEBI" id="CHEBI:60392"/>
        <dbReference type="ChEBI" id="CHEBI:61386"/>
        <dbReference type="ChEBI" id="CHEBI:61387"/>
        <dbReference type="EC" id="2.7.8.13"/>
    </reaction>
</comment>
<comment type="cofactor">
    <cofactor evidence="1">
        <name>Mg(2+)</name>
        <dbReference type="ChEBI" id="CHEBI:18420"/>
    </cofactor>
</comment>
<comment type="pathway">
    <text evidence="1">Cell wall biogenesis; peptidoglycan biosynthesis.</text>
</comment>
<comment type="subcellular location">
    <subcellularLocation>
        <location evidence="1">Cell inner membrane</location>
        <topology evidence="1">Multi-pass membrane protein</topology>
    </subcellularLocation>
</comment>
<comment type="similarity">
    <text evidence="1">Belongs to the glycosyltransferase 4 family. MraY subfamily.</text>
</comment>
<protein>
    <recommendedName>
        <fullName evidence="1">Phospho-N-acetylmuramoyl-pentapeptide-transferase</fullName>
        <ecNumber evidence="1">2.7.8.13</ecNumber>
    </recommendedName>
    <alternativeName>
        <fullName evidence="1">UDP-MurNAc-pentapeptide phosphotransferase</fullName>
    </alternativeName>
</protein>